<proteinExistence type="evidence at transcript level"/>
<evidence type="ECO:0000255" key="1"/>
<evidence type="ECO:0000255" key="2">
    <source>
        <dbReference type="PROSITE-ProRule" id="PRU00031"/>
    </source>
</evidence>
<evidence type="ECO:0000269" key="3">
    <source>
    </source>
</evidence>
<evidence type="ECO:0000303" key="4">
    <source>
    </source>
</evidence>
<evidence type="ECO:0000305" key="5"/>
<accession>C0HMC7</accession>
<comment type="function">
    <text evidence="3 4">Anticoagulant protein that targets host intrinsic blood coagulation pathway (PubMed:36032296). Inhibits host fibrinogen coagulation (PubMed:36032296). Inhibits host thrombin (F2), cathepsin G (CTSG) but not trypsin (PubMed:36032296). May play a role in keeping the blood meal in liquid form in the gut (PubMed:36032296).</text>
</comment>
<comment type="subcellular location">
    <subcellularLocation>
        <location evidence="5">Secreted</location>
    </subcellularLocation>
</comment>
<comment type="tissue specificity">
    <text evidence="3">Highly expressed in midgut (PubMed:36032296). Expressed in salivary gland, hemolymph and ovary (PubMed:36032296).</text>
</comment>
<comment type="developmental stage">
    <text evidence="3">Expressed in eggs, larvae, nymphs and adults (PubMed:36032296). The highest expression level is in adult ticks (PubMed:36032296).</text>
</comment>
<comment type="disruption phenotype">
    <text evidence="3">RNAi-mediated knockdown results in reduced engorgement weight and engorgement rate of the female ticks (PubMed:36032296). Decreased egg hatchability (PubMed:36032296). No significant changes in feeding time and 24-hour attachment rate (PubMed:36032296).</text>
</comment>
<comment type="miscellaneous">
    <text evidence="3">Has no significant hemolytic activity.</text>
</comment>
<dbReference type="SMR" id="C0HMC7"/>
<dbReference type="GO" id="GO:0005615">
    <property type="term" value="C:extracellular space"/>
    <property type="evidence" value="ECO:0007669"/>
    <property type="project" value="TreeGrafter"/>
</dbReference>
<dbReference type="GO" id="GO:0004867">
    <property type="term" value="F:serine-type endopeptidase inhibitor activity"/>
    <property type="evidence" value="ECO:0007669"/>
    <property type="project" value="UniProtKB-KW"/>
</dbReference>
<dbReference type="GO" id="GO:0090729">
    <property type="term" value="F:toxin activity"/>
    <property type="evidence" value="ECO:0007669"/>
    <property type="project" value="UniProtKB-KW"/>
</dbReference>
<dbReference type="GO" id="GO:0044562">
    <property type="term" value="P:envenomation resulting in negative regulation of voltage-gated potassium channel activity in another organism"/>
    <property type="evidence" value="ECO:0007669"/>
    <property type="project" value="UniProtKB-ARBA"/>
</dbReference>
<dbReference type="FunFam" id="4.10.410.10:FF:000004">
    <property type="entry name" value="Tissue factor pathway inhibitor"/>
    <property type="match status" value="1"/>
</dbReference>
<dbReference type="Gene3D" id="4.10.410.10">
    <property type="entry name" value="Pancreatic trypsin inhibitor Kunitz domain"/>
    <property type="match status" value="2"/>
</dbReference>
<dbReference type="InterPro" id="IPR002223">
    <property type="entry name" value="Kunitz_BPTI"/>
</dbReference>
<dbReference type="InterPro" id="IPR036880">
    <property type="entry name" value="Kunitz_BPTI_sf"/>
</dbReference>
<dbReference type="InterPro" id="IPR020901">
    <property type="entry name" value="Prtase_inh_Kunz-CS"/>
</dbReference>
<dbReference type="InterPro" id="IPR050098">
    <property type="entry name" value="TFPI/VKTCI-like"/>
</dbReference>
<dbReference type="PANTHER" id="PTHR10083:SF381">
    <property type="entry name" value="BPTI_KUNITZ INHIBITOR DOMAIN-CONTAINING PROTEIN"/>
    <property type="match status" value="1"/>
</dbReference>
<dbReference type="PANTHER" id="PTHR10083">
    <property type="entry name" value="KUNITZ-TYPE PROTEASE INHIBITOR-RELATED"/>
    <property type="match status" value="1"/>
</dbReference>
<dbReference type="Pfam" id="PF00014">
    <property type="entry name" value="Kunitz_BPTI"/>
    <property type="match status" value="2"/>
</dbReference>
<dbReference type="PRINTS" id="PR00759">
    <property type="entry name" value="BASICPTASE"/>
</dbReference>
<dbReference type="SMART" id="SM00131">
    <property type="entry name" value="KU"/>
    <property type="match status" value="2"/>
</dbReference>
<dbReference type="SUPFAM" id="SSF57362">
    <property type="entry name" value="BPTI-like"/>
    <property type="match status" value="2"/>
</dbReference>
<dbReference type="PROSITE" id="PS00280">
    <property type="entry name" value="BPTI_KUNITZ_1"/>
    <property type="match status" value="2"/>
</dbReference>
<dbReference type="PROSITE" id="PS50279">
    <property type="entry name" value="BPTI_KUNITZ_2"/>
    <property type="match status" value="2"/>
</dbReference>
<protein>
    <recommendedName>
        <fullName evidence="4">Doenitin-1</fullName>
    </recommendedName>
</protein>
<organism>
    <name type="scientific">Haemaphysalis doenitzi</name>
    <name type="common">Tick</name>
    <dbReference type="NCBI Taxonomy" id="1048531"/>
    <lineage>
        <taxon>Eukaryota</taxon>
        <taxon>Metazoa</taxon>
        <taxon>Ecdysozoa</taxon>
        <taxon>Arthropoda</taxon>
        <taxon>Chelicerata</taxon>
        <taxon>Arachnida</taxon>
        <taxon>Acari</taxon>
        <taxon>Parasitiformes</taxon>
        <taxon>Ixodida</taxon>
        <taxon>Ixodoidea</taxon>
        <taxon>Ixodidae</taxon>
        <taxon>Haemaphysalinae</taxon>
        <taxon>Haemaphysalis</taxon>
    </lineage>
</organism>
<name>KUN_HAEDO</name>
<keyword id="KW-1203">Blood coagulation cascade inhibiting toxin</keyword>
<keyword id="KW-1015">Disulfide bond</keyword>
<keyword id="KW-1199">Hemostasis impairing toxin</keyword>
<keyword id="KW-0646">Protease inhibitor</keyword>
<keyword id="KW-0677">Repeat</keyword>
<keyword id="KW-0964">Secreted</keyword>
<keyword id="KW-0722">Serine protease inhibitor</keyword>
<keyword id="KW-0732">Signal</keyword>
<keyword id="KW-0800">Toxin</keyword>
<sequence>MKLFIFLALFGAAFAQRNGFCRLPAEPGICRAFIPRYYFDVEKGQCEEFIYGGCKGNENNFETLKECKDACTEPEKASDFEKADFETGCKPAPETGHCLASHERWFFNTASGECEAFTYGGCGGNDNNYESKEECEFACKY</sequence>
<feature type="signal peptide" evidence="1">
    <location>
        <begin position="1"/>
        <end position="15"/>
    </location>
</feature>
<feature type="chain" id="PRO_0000461206" description="Doenitin-1" evidence="1">
    <location>
        <begin position="16"/>
        <end position="141"/>
    </location>
</feature>
<feature type="domain" description="BPTI/Kunitz inhibitor 1" evidence="2">
    <location>
        <begin position="21"/>
        <end position="71"/>
    </location>
</feature>
<feature type="domain" description="BPTI/Kunitz inhibitor 2" evidence="2">
    <location>
        <begin position="89"/>
        <end position="139"/>
    </location>
</feature>
<feature type="disulfide bond" evidence="2">
    <location>
        <begin position="21"/>
        <end position="71"/>
    </location>
</feature>
<feature type="disulfide bond" evidence="2">
    <location>
        <begin position="30"/>
        <end position="54"/>
    </location>
</feature>
<feature type="disulfide bond" evidence="2">
    <location>
        <begin position="46"/>
        <end position="67"/>
    </location>
</feature>
<feature type="disulfide bond" evidence="2">
    <location>
        <begin position="89"/>
        <end position="139"/>
    </location>
</feature>
<feature type="disulfide bond" evidence="2">
    <location>
        <begin position="98"/>
        <end position="122"/>
    </location>
</feature>
<feature type="disulfide bond" evidence="2">
    <location>
        <begin position="114"/>
        <end position="135"/>
    </location>
</feature>
<reference evidence="5" key="1">
    <citation type="journal article" date="2022" name="Front. Vet. Sci.">
        <title>Doenitin-1: A novel Kunitz family protein with versatile functions during feeding and reproduction of the tick Haemaphysalis doenitzi.</title>
        <authorList>
            <person name="Lu J."/>
            <person name="Wang K."/>
            <person name="Gao Z."/>
            <person name="Zhang S."/>
            <person name="Li H."/>
            <person name="Shi Y."/>
            <person name="Song X."/>
            <person name="Liu J."/>
            <person name="Yu Z."/>
            <person name="Yang X."/>
        </authorList>
    </citation>
    <scope>FUNCTION</scope>
    <scope>TISSUE SPECIFICITY</scope>
    <scope>DEVELOPMENTAL STAGE</scope>
    <scope>DISRUPTION PHENOTYPE</scope>
</reference>